<organism>
    <name type="scientific">Synechococcus sp. (strain WH7803)</name>
    <dbReference type="NCBI Taxonomy" id="32051"/>
    <lineage>
        <taxon>Bacteria</taxon>
        <taxon>Bacillati</taxon>
        <taxon>Cyanobacteriota</taxon>
        <taxon>Cyanophyceae</taxon>
        <taxon>Synechococcales</taxon>
        <taxon>Synechococcaceae</taxon>
        <taxon>Synechococcus</taxon>
    </lineage>
</organism>
<dbReference type="EMBL" id="CT971583">
    <property type="protein sequence ID" value="CAK23093.1"/>
    <property type="molecule type" value="Genomic_DNA"/>
</dbReference>
<dbReference type="SMR" id="A5GJH8"/>
<dbReference type="STRING" id="32051.SynWH7803_0667"/>
<dbReference type="KEGG" id="syx:SynWH7803_0667"/>
<dbReference type="HOGENOM" id="CLU_215773_1_0_3"/>
<dbReference type="Proteomes" id="UP000001566">
    <property type="component" value="Chromosome"/>
</dbReference>
<dbReference type="GO" id="GO:0009522">
    <property type="term" value="C:photosystem I"/>
    <property type="evidence" value="ECO:0007669"/>
    <property type="project" value="UniProtKB-KW"/>
</dbReference>
<dbReference type="GO" id="GO:0031676">
    <property type="term" value="C:plasma membrane-derived thylakoid membrane"/>
    <property type="evidence" value="ECO:0007669"/>
    <property type="project" value="UniProtKB-SubCell"/>
</dbReference>
<dbReference type="GO" id="GO:0015979">
    <property type="term" value="P:photosynthesis"/>
    <property type="evidence" value="ECO:0007669"/>
    <property type="project" value="UniProtKB-UniRule"/>
</dbReference>
<dbReference type="HAMAP" id="MF_00828">
    <property type="entry name" value="PSI_PsaM"/>
    <property type="match status" value="1"/>
</dbReference>
<dbReference type="InterPro" id="IPR010010">
    <property type="entry name" value="PSI_PsaM"/>
</dbReference>
<dbReference type="InterPro" id="IPR037279">
    <property type="entry name" value="PSI_PsaM_sf"/>
</dbReference>
<dbReference type="NCBIfam" id="TIGR03053">
    <property type="entry name" value="PS_I_psaM"/>
    <property type="match status" value="1"/>
</dbReference>
<dbReference type="Pfam" id="PF07465">
    <property type="entry name" value="PsaM"/>
    <property type="match status" value="1"/>
</dbReference>
<dbReference type="SUPFAM" id="SSF81548">
    <property type="entry name" value="Subunit XII of photosystem I reaction centre, PsaM"/>
    <property type="match status" value="1"/>
</dbReference>
<comment type="subcellular location">
    <subcellularLocation>
        <location evidence="1">Cellular thylakoid membrane</location>
        <topology evidence="1">Single-pass membrane protein</topology>
    </subcellularLocation>
</comment>
<comment type="similarity">
    <text evidence="1">Belongs to the PsaM family.</text>
</comment>
<accession>A5GJH8</accession>
<reference key="1">
    <citation type="submission" date="2006-05" db="EMBL/GenBank/DDBJ databases">
        <authorList>
            <consortium name="Genoscope"/>
        </authorList>
    </citation>
    <scope>NUCLEOTIDE SEQUENCE [LARGE SCALE GENOMIC DNA]</scope>
    <source>
        <strain>WH7803</strain>
    </source>
</reference>
<gene>
    <name evidence="1" type="primary">psaM</name>
    <name type="ordered locus">SynWH7803_0667</name>
</gene>
<feature type="chain" id="PRO_1000062716" description="Photosystem I reaction center subunit XII">
    <location>
        <begin position="1"/>
        <end position="34"/>
    </location>
</feature>
<feature type="transmembrane region" description="Helical" evidence="1">
    <location>
        <begin position="10"/>
        <end position="32"/>
    </location>
</feature>
<keyword id="KW-0472">Membrane</keyword>
<keyword id="KW-0602">Photosynthesis</keyword>
<keyword id="KW-0603">Photosystem I</keyword>
<keyword id="KW-1185">Reference proteome</keyword>
<keyword id="KW-0793">Thylakoid</keyword>
<keyword id="KW-0812">Transmembrane</keyword>
<keyword id="KW-1133">Transmembrane helix</keyword>
<name>PSAM_SYNPW</name>
<proteinExistence type="inferred from homology"/>
<evidence type="ECO:0000255" key="1">
    <source>
        <dbReference type="HAMAP-Rule" id="MF_00828"/>
    </source>
</evidence>
<protein>
    <recommendedName>
        <fullName evidence="1">Photosystem I reaction center subunit XII</fullName>
    </recommendedName>
    <alternativeName>
        <fullName evidence="1">PSI-M</fullName>
    </alternativeName>
</protein>
<sequence length="34" mass="3573">MVSSITQAEIFIALVVAAHAGVLAVRLCVSLYRA</sequence>